<reference key="1">
    <citation type="journal article" date="2006" name="Science">
        <title>A small microbial genome: the end of a long symbiotic relationship?</title>
        <authorList>
            <person name="Perez-Brocal V."/>
            <person name="Gil R."/>
            <person name="Ramos S."/>
            <person name="Lamelas A."/>
            <person name="Postigo M."/>
            <person name="Michelena J.M."/>
            <person name="Silva F.J."/>
            <person name="Moya A."/>
            <person name="Latorre A."/>
        </authorList>
    </citation>
    <scope>NUCLEOTIDE SEQUENCE [LARGE SCALE GENOMIC DNA]</scope>
    <source>
        <strain>Cc</strain>
    </source>
</reference>
<organism>
    <name type="scientific">Buchnera aphidicola subsp. Cinara cedri (strain Cc)</name>
    <dbReference type="NCBI Taxonomy" id="372461"/>
    <lineage>
        <taxon>Bacteria</taxon>
        <taxon>Pseudomonadati</taxon>
        <taxon>Pseudomonadota</taxon>
        <taxon>Gammaproteobacteria</taxon>
        <taxon>Enterobacterales</taxon>
        <taxon>Erwiniaceae</taxon>
        <taxon>Buchnera</taxon>
    </lineage>
</organism>
<evidence type="ECO:0000255" key="1">
    <source>
        <dbReference type="HAMAP-Rule" id="MF_01371"/>
    </source>
</evidence>
<evidence type="ECO:0000305" key="2"/>
<proteinExistence type="inferred from homology"/>
<feature type="chain" id="PRO_1000056016" description="Large ribosomal subunit protein uL30">
    <location>
        <begin position="1"/>
        <end position="57"/>
    </location>
</feature>
<keyword id="KW-1185">Reference proteome</keyword>
<keyword id="KW-0687">Ribonucleoprotein</keyword>
<keyword id="KW-0689">Ribosomal protein</keyword>
<gene>
    <name evidence="1" type="primary">rpmD</name>
    <name type="ordered locus">BCc_323</name>
</gene>
<comment type="subunit">
    <text evidence="1">Part of the 50S ribosomal subunit.</text>
</comment>
<comment type="similarity">
    <text evidence="1">Belongs to the universal ribosomal protein uL30 family.</text>
</comment>
<dbReference type="EMBL" id="CP000263">
    <property type="protein sequence ID" value="ABJ90777.1"/>
    <property type="molecule type" value="Genomic_DNA"/>
</dbReference>
<dbReference type="SMR" id="Q057C2"/>
<dbReference type="STRING" id="372461.BCc_323"/>
<dbReference type="KEGG" id="bcc:BCc_323"/>
<dbReference type="eggNOG" id="COG1841">
    <property type="taxonomic scope" value="Bacteria"/>
</dbReference>
<dbReference type="HOGENOM" id="CLU_131047_1_4_6"/>
<dbReference type="OrthoDB" id="9812790at2"/>
<dbReference type="Proteomes" id="UP000000669">
    <property type="component" value="Chromosome"/>
</dbReference>
<dbReference type="GO" id="GO:0022625">
    <property type="term" value="C:cytosolic large ribosomal subunit"/>
    <property type="evidence" value="ECO:0007669"/>
    <property type="project" value="TreeGrafter"/>
</dbReference>
<dbReference type="GO" id="GO:0003735">
    <property type="term" value="F:structural constituent of ribosome"/>
    <property type="evidence" value="ECO:0007669"/>
    <property type="project" value="InterPro"/>
</dbReference>
<dbReference type="GO" id="GO:0006412">
    <property type="term" value="P:translation"/>
    <property type="evidence" value="ECO:0007669"/>
    <property type="project" value="UniProtKB-UniRule"/>
</dbReference>
<dbReference type="CDD" id="cd01658">
    <property type="entry name" value="Ribosomal_L30"/>
    <property type="match status" value="1"/>
</dbReference>
<dbReference type="FunFam" id="3.30.1390.20:FF:000001">
    <property type="entry name" value="50S ribosomal protein L30"/>
    <property type="match status" value="1"/>
</dbReference>
<dbReference type="Gene3D" id="3.30.1390.20">
    <property type="entry name" value="Ribosomal protein L30, ferredoxin-like fold domain"/>
    <property type="match status" value="1"/>
</dbReference>
<dbReference type="HAMAP" id="MF_01371_B">
    <property type="entry name" value="Ribosomal_uL30_B"/>
    <property type="match status" value="1"/>
</dbReference>
<dbReference type="InterPro" id="IPR036919">
    <property type="entry name" value="Ribo_uL30_ferredoxin-like_sf"/>
</dbReference>
<dbReference type="InterPro" id="IPR005996">
    <property type="entry name" value="Ribosomal_uL30_bac-type"/>
</dbReference>
<dbReference type="InterPro" id="IPR016082">
    <property type="entry name" value="Ribosomal_uL30_ferredoxin-like"/>
</dbReference>
<dbReference type="NCBIfam" id="TIGR01308">
    <property type="entry name" value="rpmD_bact"/>
    <property type="match status" value="1"/>
</dbReference>
<dbReference type="PANTHER" id="PTHR15892:SF2">
    <property type="entry name" value="LARGE RIBOSOMAL SUBUNIT PROTEIN UL30M"/>
    <property type="match status" value="1"/>
</dbReference>
<dbReference type="PANTHER" id="PTHR15892">
    <property type="entry name" value="MITOCHONDRIAL RIBOSOMAL PROTEIN L30"/>
    <property type="match status" value="1"/>
</dbReference>
<dbReference type="Pfam" id="PF00327">
    <property type="entry name" value="Ribosomal_L30"/>
    <property type="match status" value="1"/>
</dbReference>
<dbReference type="PIRSF" id="PIRSF002211">
    <property type="entry name" value="Ribosomal_L30_bac-type"/>
    <property type="match status" value="1"/>
</dbReference>
<dbReference type="SUPFAM" id="SSF55129">
    <property type="entry name" value="Ribosomal protein L30p/L7e"/>
    <property type="match status" value="1"/>
</dbReference>
<sequence>MKTILITQIKSQIGRLPKHKATMKGLGLRNIGDTVERKDTAAIRGMIKKVYYMISIK</sequence>
<name>RL30_BUCCC</name>
<accession>Q057C2</accession>
<protein>
    <recommendedName>
        <fullName evidence="1">Large ribosomal subunit protein uL30</fullName>
    </recommendedName>
    <alternativeName>
        <fullName evidence="2">50S ribosomal protein L30</fullName>
    </alternativeName>
</protein>